<keyword id="KW-0067">ATP-binding</keyword>
<keyword id="KW-0963">Cytoplasm</keyword>
<keyword id="KW-0235">DNA replication</keyword>
<keyword id="KW-0238">DNA-binding</keyword>
<keyword id="KW-0446">Lipid-binding</keyword>
<keyword id="KW-0547">Nucleotide-binding</keyword>
<keyword id="KW-1185">Reference proteome</keyword>
<accession>P49991</accession>
<accession>A0A1R3XTY8</accession>
<accession>X2BDR0</accession>
<sequence>MTDDPGSGFTTVWNAVVSELNGDPKVDDGPSSDANLSAPLTPQQRAWLNLVQPLTIVEGFALLSVPSSFVQNEIERHLRAPITDALSRRLGHQIQLGVRIAPPATDEADDTTVPPSENPATTSPDTTTDNDEIDDSAAARGDNQHSWPSYFTERPRNTDSATAGVTSLNRRYTFDTFVIGASNRFAHAAALAIAEAPARAYNPLFIWGESGLGKTHLLHAAGNYAQRLFPGMRVKYVSTEEFTNDFINSLRDDRKVAFKRSYRDVDVLLVDDIQFIEGKEGIQEEFFHTFNTLHNANKQIVISSDRPPKQLATLEDRLRTRFEWGLITDVQPPELETRIAILRKKAQMERLAIPDDVLELIASSIERNIRELEGALIRVTAFASLNKTPIDKALAEIVLRDLIADANTMQISAATIMAATAEYFDTTVEELRGPGKTRALAQSRQIAMYLCRELTDLSLPKIGQAFGRDHTTVMYAQRKILSEMAERREVFDHVKELTTRIRQRSKR</sequence>
<name>DNAA_MYCBO</name>
<gene>
    <name evidence="1" type="primary">dnaA</name>
    <name type="ordered locus">BQ2027_MB0001</name>
</gene>
<evidence type="ECO:0000255" key="1">
    <source>
        <dbReference type="HAMAP-Rule" id="MF_00377"/>
    </source>
</evidence>
<evidence type="ECO:0000256" key="2">
    <source>
        <dbReference type="SAM" id="MobiDB-lite"/>
    </source>
</evidence>
<evidence type="ECO:0000305" key="3"/>
<protein>
    <recommendedName>
        <fullName evidence="1">Chromosomal replication initiator protein DnaA</fullName>
    </recommendedName>
</protein>
<reference key="1">
    <citation type="journal article" date="2003" name="Proc. Natl. Acad. Sci. U.S.A.">
        <title>The complete genome sequence of Mycobacterium bovis.</title>
        <authorList>
            <person name="Garnier T."/>
            <person name="Eiglmeier K."/>
            <person name="Camus J.-C."/>
            <person name="Medina N."/>
            <person name="Mansoor H."/>
            <person name="Pryor M."/>
            <person name="Duthoy S."/>
            <person name="Grondin S."/>
            <person name="Lacroix C."/>
            <person name="Monsempe C."/>
            <person name="Simon S."/>
            <person name="Harris B."/>
            <person name="Atkin R."/>
            <person name="Doggett J."/>
            <person name="Mayes R."/>
            <person name="Keating L."/>
            <person name="Wheeler P.R."/>
            <person name="Parkhill J."/>
            <person name="Barrell B.G."/>
            <person name="Cole S.T."/>
            <person name="Gordon S.V."/>
            <person name="Hewinson R.G."/>
        </authorList>
    </citation>
    <scope>NUCLEOTIDE SEQUENCE [LARGE SCALE GENOMIC DNA]</scope>
    <source>
        <strain>ATCC BAA-935 / AF2122/97</strain>
    </source>
</reference>
<reference key="2">
    <citation type="journal article" date="2017" name="Genome Announc.">
        <title>Updated reference genome sequence and annotation of Mycobacterium bovis AF2122/97.</title>
        <authorList>
            <person name="Malone K.M."/>
            <person name="Farrell D."/>
            <person name="Stuber T.P."/>
            <person name="Schubert O.T."/>
            <person name="Aebersold R."/>
            <person name="Robbe-Austerman S."/>
            <person name="Gordon S.V."/>
        </authorList>
    </citation>
    <scope>NUCLEOTIDE SEQUENCE [LARGE SCALE GENOMIC DNA]</scope>
    <scope>GENOME REANNOTATION</scope>
    <source>
        <strain>ATCC BAA-935 / AF2122/97</strain>
    </source>
</reference>
<reference key="3">
    <citation type="journal article" date="1995" name="Gene">
        <title>Amplification and cloning of the Mycobacterium tuberculosis dnaA gene.</title>
        <authorList>
            <person name="Rajagopalan M."/>
            <person name="Qin M.H."/>
            <person name="Steingrube V.A."/>
            <person name="Nash D.R."/>
            <person name="Wallace R.J. Jr."/>
            <person name="Madiraju M.V.V.S."/>
        </authorList>
    </citation>
    <scope>NUCLEOTIDE SEQUENCE [GENOMIC DNA] OF 213-471</scope>
</reference>
<organism>
    <name type="scientific">Mycobacterium bovis (strain ATCC BAA-935 / AF2122/97)</name>
    <dbReference type="NCBI Taxonomy" id="233413"/>
    <lineage>
        <taxon>Bacteria</taxon>
        <taxon>Bacillati</taxon>
        <taxon>Actinomycetota</taxon>
        <taxon>Actinomycetes</taxon>
        <taxon>Mycobacteriales</taxon>
        <taxon>Mycobacteriaceae</taxon>
        <taxon>Mycobacterium</taxon>
        <taxon>Mycobacterium tuberculosis complex</taxon>
    </lineage>
</organism>
<dbReference type="EMBL" id="LT708304">
    <property type="protein sequence ID" value="SIT98333.1"/>
    <property type="molecule type" value="Genomic_DNA"/>
</dbReference>
<dbReference type="EMBL" id="U19186">
    <property type="protein sequence ID" value="AAA85542.1"/>
    <property type="molecule type" value="Genomic_DNA"/>
</dbReference>
<dbReference type="PIR" id="PC4084">
    <property type="entry name" value="PC4084"/>
</dbReference>
<dbReference type="RefSeq" id="NP_853671.1">
    <property type="nucleotide sequence ID" value="NC_002945.3"/>
</dbReference>
<dbReference type="RefSeq" id="WP_010950320.1">
    <property type="nucleotide sequence ID" value="NC_002945.4"/>
</dbReference>
<dbReference type="SMR" id="P49991"/>
<dbReference type="KEGG" id="mbo:BQ2027_MB0001"/>
<dbReference type="PATRIC" id="fig|233413.5.peg.1"/>
<dbReference type="Proteomes" id="UP000001419">
    <property type="component" value="Chromosome"/>
</dbReference>
<dbReference type="GO" id="GO:0005737">
    <property type="term" value="C:cytoplasm"/>
    <property type="evidence" value="ECO:0007669"/>
    <property type="project" value="UniProtKB-SubCell"/>
</dbReference>
<dbReference type="GO" id="GO:0005886">
    <property type="term" value="C:plasma membrane"/>
    <property type="evidence" value="ECO:0007669"/>
    <property type="project" value="TreeGrafter"/>
</dbReference>
<dbReference type="GO" id="GO:0005524">
    <property type="term" value="F:ATP binding"/>
    <property type="evidence" value="ECO:0007669"/>
    <property type="project" value="UniProtKB-UniRule"/>
</dbReference>
<dbReference type="GO" id="GO:0016887">
    <property type="term" value="F:ATP hydrolysis activity"/>
    <property type="evidence" value="ECO:0007669"/>
    <property type="project" value="InterPro"/>
</dbReference>
<dbReference type="GO" id="GO:0003688">
    <property type="term" value="F:DNA replication origin binding"/>
    <property type="evidence" value="ECO:0007669"/>
    <property type="project" value="UniProtKB-UniRule"/>
</dbReference>
<dbReference type="GO" id="GO:0008289">
    <property type="term" value="F:lipid binding"/>
    <property type="evidence" value="ECO:0007669"/>
    <property type="project" value="UniProtKB-KW"/>
</dbReference>
<dbReference type="GO" id="GO:0006270">
    <property type="term" value="P:DNA replication initiation"/>
    <property type="evidence" value="ECO:0007669"/>
    <property type="project" value="UniProtKB-UniRule"/>
</dbReference>
<dbReference type="GO" id="GO:0006275">
    <property type="term" value="P:regulation of DNA replication"/>
    <property type="evidence" value="ECO:0007669"/>
    <property type="project" value="UniProtKB-UniRule"/>
</dbReference>
<dbReference type="CDD" id="cd00009">
    <property type="entry name" value="AAA"/>
    <property type="match status" value="1"/>
</dbReference>
<dbReference type="CDD" id="cd06571">
    <property type="entry name" value="Bac_DnaA_C"/>
    <property type="match status" value="1"/>
</dbReference>
<dbReference type="FunFam" id="1.10.1750.10:FF:000002">
    <property type="entry name" value="Chromosomal replication initiator protein DnaA"/>
    <property type="match status" value="1"/>
</dbReference>
<dbReference type="FunFam" id="1.10.8.60:FF:000003">
    <property type="entry name" value="Chromosomal replication initiator protein DnaA"/>
    <property type="match status" value="1"/>
</dbReference>
<dbReference type="FunFam" id="3.40.50.300:FF:000150">
    <property type="entry name" value="Chromosomal replication initiator protein DnaA"/>
    <property type="match status" value="1"/>
</dbReference>
<dbReference type="Gene3D" id="1.10.1750.10">
    <property type="match status" value="1"/>
</dbReference>
<dbReference type="Gene3D" id="1.10.8.60">
    <property type="match status" value="1"/>
</dbReference>
<dbReference type="Gene3D" id="3.30.300.180">
    <property type="match status" value="1"/>
</dbReference>
<dbReference type="Gene3D" id="3.40.50.300">
    <property type="entry name" value="P-loop containing nucleotide triphosphate hydrolases"/>
    <property type="match status" value="1"/>
</dbReference>
<dbReference type="HAMAP" id="MF_00377">
    <property type="entry name" value="DnaA_bact"/>
    <property type="match status" value="1"/>
</dbReference>
<dbReference type="InterPro" id="IPR003593">
    <property type="entry name" value="AAA+_ATPase"/>
</dbReference>
<dbReference type="InterPro" id="IPR001957">
    <property type="entry name" value="Chromosome_initiator_DnaA"/>
</dbReference>
<dbReference type="InterPro" id="IPR020591">
    <property type="entry name" value="Chromosome_initiator_DnaA-like"/>
</dbReference>
<dbReference type="InterPro" id="IPR018312">
    <property type="entry name" value="Chromosome_initiator_DnaA_CS"/>
</dbReference>
<dbReference type="InterPro" id="IPR013159">
    <property type="entry name" value="DnaA_C"/>
</dbReference>
<dbReference type="InterPro" id="IPR013317">
    <property type="entry name" value="DnaA_dom"/>
</dbReference>
<dbReference type="InterPro" id="IPR038454">
    <property type="entry name" value="DnaA_N_sf"/>
</dbReference>
<dbReference type="InterPro" id="IPR027417">
    <property type="entry name" value="P-loop_NTPase"/>
</dbReference>
<dbReference type="InterPro" id="IPR010921">
    <property type="entry name" value="Trp_repressor/repl_initiator"/>
</dbReference>
<dbReference type="NCBIfam" id="TIGR00362">
    <property type="entry name" value="DnaA"/>
    <property type="match status" value="1"/>
</dbReference>
<dbReference type="NCBIfam" id="NF010686">
    <property type="entry name" value="PRK14086.1"/>
    <property type="match status" value="1"/>
</dbReference>
<dbReference type="PANTHER" id="PTHR30050">
    <property type="entry name" value="CHROMOSOMAL REPLICATION INITIATOR PROTEIN DNAA"/>
    <property type="match status" value="1"/>
</dbReference>
<dbReference type="PANTHER" id="PTHR30050:SF2">
    <property type="entry name" value="CHROMOSOMAL REPLICATION INITIATOR PROTEIN DNAA"/>
    <property type="match status" value="1"/>
</dbReference>
<dbReference type="Pfam" id="PF00308">
    <property type="entry name" value="Bac_DnaA"/>
    <property type="match status" value="1"/>
</dbReference>
<dbReference type="Pfam" id="PF08299">
    <property type="entry name" value="Bac_DnaA_C"/>
    <property type="match status" value="1"/>
</dbReference>
<dbReference type="PRINTS" id="PR00051">
    <property type="entry name" value="DNAA"/>
</dbReference>
<dbReference type="SMART" id="SM00382">
    <property type="entry name" value="AAA"/>
    <property type="match status" value="1"/>
</dbReference>
<dbReference type="SMART" id="SM00760">
    <property type="entry name" value="Bac_DnaA_C"/>
    <property type="match status" value="1"/>
</dbReference>
<dbReference type="SUPFAM" id="SSF52540">
    <property type="entry name" value="P-loop containing nucleoside triphosphate hydrolases"/>
    <property type="match status" value="1"/>
</dbReference>
<dbReference type="SUPFAM" id="SSF48295">
    <property type="entry name" value="TrpR-like"/>
    <property type="match status" value="1"/>
</dbReference>
<dbReference type="PROSITE" id="PS01008">
    <property type="entry name" value="DNAA"/>
    <property type="match status" value="1"/>
</dbReference>
<proteinExistence type="inferred from homology"/>
<feature type="chain" id="PRO_0000114210" description="Chromosomal replication initiator protein DnaA">
    <location>
        <begin position="1"/>
        <end position="507"/>
    </location>
</feature>
<feature type="region of interest" description="Domain I, interacts with DnaA modulators" evidence="1">
    <location>
        <begin position="1"/>
        <end position="112"/>
    </location>
</feature>
<feature type="region of interest" description="Disordered" evidence="2">
    <location>
        <begin position="99"/>
        <end position="162"/>
    </location>
</feature>
<feature type="region of interest" description="Domain II" evidence="1">
    <location>
        <begin position="113"/>
        <end position="166"/>
    </location>
</feature>
<feature type="region of interest" description="Domain III, AAA+ region" evidence="1">
    <location>
        <begin position="167"/>
        <end position="383"/>
    </location>
</feature>
<feature type="region of interest" description="Domain IV, binds dsDNA" evidence="1">
    <location>
        <begin position="384"/>
        <end position="507"/>
    </location>
</feature>
<feature type="compositionally biased region" description="Polar residues" evidence="2">
    <location>
        <begin position="113"/>
        <end position="127"/>
    </location>
</feature>
<feature type="binding site" evidence="1">
    <location>
        <position position="211"/>
    </location>
    <ligand>
        <name>ATP</name>
        <dbReference type="ChEBI" id="CHEBI:30616"/>
    </ligand>
</feature>
<feature type="binding site" evidence="1">
    <location>
        <position position="213"/>
    </location>
    <ligand>
        <name>ATP</name>
        <dbReference type="ChEBI" id="CHEBI:30616"/>
    </ligand>
</feature>
<feature type="binding site" evidence="1">
    <location>
        <position position="214"/>
    </location>
    <ligand>
        <name>ATP</name>
        <dbReference type="ChEBI" id="CHEBI:30616"/>
    </ligand>
</feature>
<feature type="binding site" evidence="1">
    <location>
        <position position="215"/>
    </location>
    <ligand>
        <name>ATP</name>
        <dbReference type="ChEBI" id="CHEBI:30616"/>
    </ligand>
</feature>
<feature type="sequence conflict" description="In Ref. 3; AAA85542." evidence="3" ref="3">
    <original>H</original>
    <variation>R</variation>
    <location>
        <position position="288"/>
    </location>
</feature>
<feature type="sequence conflict" description="In Ref. 3; AAA85542." evidence="3" ref="3">
    <original>R</original>
    <variation>D</variation>
    <location>
        <position position="321"/>
    </location>
</feature>
<feature type="sequence conflict" description="In Ref. 3; AAA85542." evidence="3" ref="3">
    <original>I</original>
    <variation>V</variation>
    <location>
        <position position="353"/>
    </location>
</feature>
<feature type="sequence conflict" description="In Ref. 3; AAA85542." evidence="3" ref="3">
    <original>D</original>
    <variation>G</variation>
    <location>
        <position position="356"/>
    </location>
</feature>
<feature type="sequence conflict" description="In Ref. 3; AAA85542." evidence="3" ref="3">
    <original>E</original>
    <variation>V</variation>
    <location>
        <position position="371"/>
    </location>
</feature>
<feature type="sequence conflict" description="In Ref. 3; AAA85542." evidence="3" ref="3">
    <original>A</original>
    <variation>P</variation>
    <location>
        <position position="381"/>
    </location>
</feature>
<feature type="sequence conflict" description="In Ref. 3; AAA85542." evidence="3" ref="3">
    <original>N</original>
    <variation>S</variation>
    <location>
        <position position="407"/>
    </location>
</feature>
<feature type="sequence conflict" description="In Ref. 3; AAA85542." evidence="3" ref="3">
    <original>EE</original>
    <variation>GR</variation>
    <location>
        <begin position="429"/>
        <end position="430"/>
    </location>
</feature>
<feature type="sequence conflict" description="In Ref. 3; AAA85542." evidence="3" ref="3">
    <original>T</original>
    <variation>P</variation>
    <location>
        <position position="437"/>
    </location>
</feature>
<comment type="function">
    <text evidence="1">Plays an essential role in the initiation and regulation of chromosomal replication. ATP-DnaA binds to the origin of replication (oriC) to initiate formation of the DNA replication initiation complex once per cell cycle. Binds the DnaA box (a 9 base pair repeat at the origin) and separates the double-stranded (ds)DNA. Forms a right-handed helical filament on oriC DNA; dsDNA binds to the exterior of the filament while single-stranded (ss)DNA is stabiized in the filament's interior. The ATP-DnaA-oriC complex binds and stabilizes one strand of the AT-rich DNA unwinding element (DUE), permitting loading of DNA polymerase. After initiation quickly degrades to an ADP-DnaA complex that is not apt for DNA replication. Binds acidic phospholipids.</text>
</comment>
<comment type="subunit">
    <text evidence="1">Oligomerizes as a right-handed, spiral filament on DNA at oriC.</text>
</comment>
<comment type="subcellular location">
    <subcellularLocation>
        <location evidence="1">Cytoplasm</location>
    </subcellularLocation>
</comment>
<comment type="domain">
    <text evidence="1">Domain I is involved in oligomerization and binding regulators, domain II is flexibile and of varying length in different bacteria, domain III forms the AAA+ region, while domain IV binds dsDNA.</text>
</comment>
<comment type="similarity">
    <text evidence="1">Belongs to the DnaA family.</text>
</comment>